<comment type="function">
    <text evidence="1">Functions in the biosynthesis of branched-chain amino acids. Catalyzes the dehydration of (2R,3R)-2,3-dihydroxy-3-methylpentanoate (2,3-dihydroxy-3-methylvalerate) into 2-oxo-3-methylpentanoate (2-oxo-3-methylvalerate) and of (2R)-2,3-dihydroxy-3-methylbutanoate (2,3-dihydroxyisovalerate) into 2-oxo-3-methylbutanoate (2-oxoisovalerate), the penultimate precursor to L-isoleucine and L-valine, respectively.</text>
</comment>
<comment type="catalytic activity">
    <reaction evidence="1">
        <text>(2R)-2,3-dihydroxy-3-methylbutanoate = 3-methyl-2-oxobutanoate + H2O</text>
        <dbReference type="Rhea" id="RHEA:24809"/>
        <dbReference type="ChEBI" id="CHEBI:11851"/>
        <dbReference type="ChEBI" id="CHEBI:15377"/>
        <dbReference type="ChEBI" id="CHEBI:49072"/>
        <dbReference type="EC" id="4.2.1.9"/>
    </reaction>
    <physiologicalReaction direction="left-to-right" evidence="1">
        <dbReference type="Rhea" id="RHEA:24810"/>
    </physiologicalReaction>
</comment>
<comment type="catalytic activity">
    <reaction evidence="1">
        <text>(2R,3R)-2,3-dihydroxy-3-methylpentanoate = (S)-3-methyl-2-oxopentanoate + H2O</text>
        <dbReference type="Rhea" id="RHEA:27694"/>
        <dbReference type="ChEBI" id="CHEBI:15377"/>
        <dbReference type="ChEBI" id="CHEBI:35146"/>
        <dbReference type="ChEBI" id="CHEBI:49258"/>
        <dbReference type="EC" id="4.2.1.9"/>
    </reaction>
    <physiologicalReaction direction="left-to-right" evidence="1">
        <dbReference type="Rhea" id="RHEA:27695"/>
    </physiologicalReaction>
</comment>
<comment type="cofactor">
    <cofactor evidence="1">
        <name>[2Fe-2S] cluster</name>
        <dbReference type="ChEBI" id="CHEBI:190135"/>
    </cofactor>
    <text evidence="1">Binds 1 [2Fe-2S] cluster per subunit. This cluster acts as a Lewis acid cofactor.</text>
</comment>
<comment type="cofactor">
    <cofactor evidence="1">
        <name>Mg(2+)</name>
        <dbReference type="ChEBI" id="CHEBI:18420"/>
    </cofactor>
</comment>
<comment type="pathway">
    <text evidence="1">Amino-acid biosynthesis; L-isoleucine biosynthesis; L-isoleucine from 2-oxobutanoate: step 3/4.</text>
</comment>
<comment type="pathway">
    <text evidence="1">Amino-acid biosynthesis; L-valine biosynthesis; L-valine from pyruvate: step 3/4.</text>
</comment>
<comment type="subunit">
    <text evidence="1">Homodimer.</text>
</comment>
<comment type="similarity">
    <text evidence="1">Belongs to the IlvD/Edd family.</text>
</comment>
<organism>
    <name type="scientific">Anaeromyxobacter sp. (strain K)</name>
    <dbReference type="NCBI Taxonomy" id="447217"/>
    <lineage>
        <taxon>Bacteria</taxon>
        <taxon>Pseudomonadati</taxon>
        <taxon>Myxococcota</taxon>
        <taxon>Myxococcia</taxon>
        <taxon>Myxococcales</taxon>
        <taxon>Cystobacterineae</taxon>
        <taxon>Anaeromyxobacteraceae</taxon>
        <taxon>Anaeromyxobacter</taxon>
    </lineage>
</organism>
<protein>
    <recommendedName>
        <fullName evidence="1">Dihydroxy-acid dehydratase</fullName>
        <shortName evidence="1">DAD</shortName>
        <ecNumber evidence="1">4.2.1.9</ecNumber>
    </recommendedName>
</protein>
<feature type="chain" id="PRO_1000089366" description="Dihydroxy-acid dehydratase">
    <location>
        <begin position="1"/>
        <end position="560"/>
    </location>
</feature>
<feature type="active site" description="Proton acceptor" evidence="1">
    <location>
        <position position="472"/>
    </location>
</feature>
<feature type="binding site" evidence="1">
    <location>
        <position position="78"/>
    </location>
    <ligand>
        <name>Mg(2+)</name>
        <dbReference type="ChEBI" id="CHEBI:18420"/>
    </ligand>
</feature>
<feature type="binding site" evidence="1">
    <location>
        <position position="119"/>
    </location>
    <ligand>
        <name>[2Fe-2S] cluster</name>
        <dbReference type="ChEBI" id="CHEBI:190135"/>
    </ligand>
</feature>
<feature type="binding site" evidence="1">
    <location>
        <position position="120"/>
    </location>
    <ligand>
        <name>Mg(2+)</name>
        <dbReference type="ChEBI" id="CHEBI:18420"/>
    </ligand>
</feature>
<feature type="binding site" description="via carbamate group" evidence="1">
    <location>
        <position position="121"/>
    </location>
    <ligand>
        <name>Mg(2+)</name>
        <dbReference type="ChEBI" id="CHEBI:18420"/>
    </ligand>
</feature>
<feature type="binding site" evidence="1">
    <location>
        <position position="192"/>
    </location>
    <ligand>
        <name>[2Fe-2S] cluster</name>
        <dbReference type="ChEBI" id="CHEBI:190135"/>
    </ligand>
</feature>
<feature type="binding site" evidence="1">
    <location>
        <position position="446"/>
    </location>
    <ligand>
        <name>Mg(2+)</name>
        <dbReference type="ChEBI" id="CHEBI:18420"/>
    </ligand>
</feature>
<feature type="modified residue" description="N6-carboxylysine" evidence="1">
    <location>
        <position position="121"/>
    </location>
</feature>
<reference key="1">
    <citation type="submission" date="2008-08" db="EMBL/GenBank/DDBJ databases">
        <title>Complete sequence of Anaeromyxobacter sp. K.</title>
        <authorList>
            <consortium name="US DOE Joint Genome Institute"/>
            <person name="Lucas S."/>
            <person name="Copeland A."/>
            <person name="Lapidus A."/>
            <person name="Glavina del Rio T."/>
            <person name="Dalin E."/>
            <person name="Tice H."/>
            <person name="Bruce D."/>
            <person name="Goodwin L."/>
            <person name="Pitluck S."/>
            <person name="Saunders E."/>
            <person name="Brettin T."/>
            <person name="Detter J.C."/>
            <person name="Han C."/>
            <person name="Larimer F."/>
            <person name="Land M."/>
            <person name="Hauser L."/>
            <person name="Kyrpides N."/>
            <person name="Ovchinnikiva G."/>
            <person name="Beliaev A."/>
        </authorList>
    </citation>
    <scope>NUCLEOTIDE SEQUENCE [LARGE SCALE GENOMIC DNA]</scope>
    <source>
        <strain>K</strain>
    </source>
</reference>
<evidence type="ECO:0000255" key="1">
    <source>
        <dbReference type="HAMAP-Rule" id="MF_00012"/>
    </source>
</evidence>
<proteinExistence type="inferred from homology"/>
<keyword id="KW-0001">2Fe-2S</keyword>
<keyword id="KW-0028">Amino-acid biosynthesis</keyword>
<keyword id="KW-0100">Branched-chain amino acid biosynthesis</keyword>
<keyword id="KW-0408">Iron</keyword>
<keyword id="KW-0411">Iron-sulfur</keyword>
<keyword id="KW-0456">Lyase</keyword>
<keyword id="KW-0460">Magnesium</keyword>
<keyword id="KW-0479">Metal-binding</keyword>
<dbReference type="EC" id="4.2.1.9" evidence="1"/>
<dbReference type="EMBL" id="CP001131">
    <property type="protein sequence ID" value="ACG75443.1"/>
    <property type="molecule type" value="Genomic_DNA"/>
</dbReference>
<dbReference type="RefSeq" id="WP_012528195.1">
    <property type="nucleotide sequence ID" value="NC_011145.1"/>
</dbReference>
<dbReference type="SMR" id="B4UI29"/>
<dbReference type="KEGG" id="ank:AnaeK_4240"/>
<dbReference type="HOGENOM" id="CLU_014271_4_2_7"/>
<dbReference type="OrthoDB" id="9807077at2"/>
<dbReference type="UniPathway" id="UPA00047">
    <property type="reaction ID" value="UER00057"/>
</dbReference>
<dbReference type="UniPathway" id="UPA00049">
    <property type="reaction ID" value="UER00061"/>
</dbReference>
<dbReference type="Proteomes" id="UP000001871">
    <property type="component" value="Chromosome"/>
</dbReference>
<dbReference type="GO" id="GO:0005829">
    <property type="term" value="C:cytosol"/>
    <property type="evidence" value="ECO:0007669"/>
    <property type="project" value="TreeGrafter"/>
</dbReference>
<dbReference type="GO" id="GO:0051537">
    <property type="term" value="F:2 iron, 2 sulfur cluster binding"/>
    <property type="evidence" value="ECO:0007669"/>
    <property type="project" value="UniProtKB-UniRule"/>
</dbReference>
<dbReference type="GO" id="GO:0004160">
    <property type="term" value="F:dihydroxy-acid dehydratase activity"/>
    <property type="evidence" value="ECO:0007669"/>
    <property type="project" value="UniProtKB-UniRule"/>
</dbReference>
<dbReference type="GO" id="GO:0000287">
    <property type="term" value="F:magnesium ion binding"/>
    <property type="evidence" value="ECO:0007669"/>
    <property type="project" value="UniProtKB-UniRule"/>
</dbReference>
<dbReference type="GO" id="GO:0009097">
    <property type="term" value="P:isoleucine biosynthetic process"/>
    <property type="evidence" value="ECO:0007669"/>
    <property type="project" value="UniProtKB-UniRule"/>
</dbReference>
<dbReference type="GO" id="GO:0009099">
    <property type="term" value="P:L-valine biosynthetic process"/>
    <property type="evidence" value="ECO:0007669"/>
    <property type="project" value="UniProtKB-UniRule"/>
</dbReference>
<dbReference type="FunFam" id="3.50.30.80:FF:000001">
    <property type="entry name" value="Dihydroxy-acid dehydratase"/>
    <property type="match status" value="1"/>
</dbReference>
<dbReference type="Gene3D" id="3.50.30.80">
    <property type="entry name" value="IlvD/EDD C-terminal domain-like"/>
    <property type="match status" value="1"/>
</dbReference>
<dbReference type="HAMAP" id="MF_00012">
    <property type="entry name" value="IlvD"/>
    <property type="match status" value="1"/>
</dbReference>
<dbReference type="InterPro" id="IPR042096">
    <property type="entry name" value="Dihydro-acid_dehy_C"/>
</dbReference>
<dbReference type="InterPro" id="IPR004404">
    <property type="entry name" value="DihydroxyA_deHydtase"/>
</dbReference>
<dbReference type="InterPro" id="IPR020558">
    <property type="entry name" value="DiOHA_6PGluconate_deHydtase_CS"/>
</dbReference>
<dbReference type="InterPro" id="IPR056740">
    <property type="entry name" value="ILV_EDD_C"/>
</dbReference>
<dbReference type="InterPro" id="IPR000581">
    <property type="entry name" value="ILV_EDD_N"/>
</dbReference>
<dbReference type="InterPro" id="IPR037237">
    <property type="entry name" value="IlvD/EDD_N"/>
</dbReference>
<dbReference type="NCBIfam" id="TIGR00110">
    <property type="entry name" value="ilvD"/>
    <property type="match status" value="1"/>
</dbReference>
<dbReference type="NCBIfam" id="NF002068">
    <property type="entry name" value="PRK00911.1"/>
    <property type="match status" value="1"/>
</dbReference>
<dbReference type="PANTHER" id="PTHR43661">
    <property type="entry name" value="D-XYLONATE DEHYDRATASE"/>
    <property type="match status" value="1"/>
</dbReference>
<dbReference type="PANTHER" id="PTHR43661:SF3">
    <property type="entry name" value="D-XYLONATE DEHYDRATASE YAGF-RELATED"/>
    <property type="match status" value="1"/>
</dbReference>
<dbReference type="Pfam" id="PF24877">
    <property type="entry name" value="ILV_EDD_C"/>
    <property type="match status" value="1"/>
</dbReference>
<dbReference type="Pfam" id="PF00920">
    <property type="entry name" value="ILVD_EDD_N"/>
    <property type="match status" value="1"/>
</dbReference>
<dbReference type="SUPFAM" id="SSF143975">
    <property type="entry name" value="IlvD/EDD N-terminal domain-like"/>
    <property type="match status" value="1"/>
</dbReference>
<dbReference type="SUPFAM" id="SSF52016">
    <property type="entry name" value="LeuD/IlvD-like"/>
    <property type="match status" value="1"/>
</dbReference>
<dbReference type="PROSITE" id="PS00886">
    <property type="entry name" value="ILVD_EDD_1"/>
    <property type="match status" value="1"/>
</dbReference>
<dbReference type="PROSITE" id="PS00887">
    <property type="entry name" value="ILVD_EDD_2"/>
    <property type="match status" value="1"/>
</dbReference>
<gene>
    <name evidence="1" type="primary">ilvD</name>
    <name type="ordered locus">AnaeK_4240</name>
</gene>
<name>ILVD_ANASK</name>
<accession>B4UI29</accession>
<sequence length="560" mass="59428">MRSDRIKKGFERAPHRSLLRATGLNDGDFEKPFIGIANSHIDIIPGHYYLQEYGRIAKDEIRKAGGVPFEFNTIGVDDGIAMGHEGMKYSLPSRELIADSIETVMNAHQLDALVCIPNCDKIVPGMLMGALRVNVPTVFVSGGPMKAGHLHDGTPIDLNTAFEAVGKRAQGQLTDAELYEIECQACPSGGSCSGMFTANSMNVLCEAMGVALPGNGTVLALTPEREALVRRAARRAVEIAADERFKLRNIANRDAIHNAMVVDMAMGGSSNTVLHMLAISREAGAPLSLRDIEEIAGKVAHIAKIAPSLATVHMEDIHRAGGVPAVLREAARRGGSVREGALTVTGETVGERIRDARTADPELIRPLENAYSPVGGLAVLFGNLAAEGAVVKTAGIQPSMRRFTGAAICFDSQDEAIAGIMGGKVKPGHFVVIRYEGPKGGPGMQEMLSPTSLIMGMGLGESVALVTDGRFSGATRGACVGHVSPEAAEGGVIGLVQDGDRITIDVEARALTVDVPDAELARRREGFRPKRRDPGSSWLRRYAHLVTNAANGAVLRSTDL</sequence>